<gene>
    <name evidence="1" type="primary">dnaJ</name>
    <name type="ordered locus">syc2019_c</name>
</gene>
<comment type="function">
    <text evidence="1">Participates actively in the response to hyperosmotic and heat shock by preventing the aggregation of stress-denatured proteins and by disaggregating proteins, also in an autonomous, DnaK-independent fashion. Unfolded proteins bind initially to DnaJ; upon interaction with the DnaJ-bound protein, DnaK hydrolyzes its bound ATP, resulting in the formation of a stable complex. GrpE releases ADP from DnaK; ATP binding to DnaK triggers the release of the substrate protein, thus completing the reaction cycle. Several rounds of ATP-dependent interactions between DnaJ, DnaK and GrpE are required for fully efficient folding. Also involved, together with DnaK and GrpE, in the DNA replication of plasmids through activation of initiation proteins.</text>
</comment>
<comment type="cofactor">
    <cofactor evidence="1">
        <name>Zn(2+)</name>
        <dbReference type="ChEBI" id="CHEBI:29105"/>
    </cofactor>
    <text evidence="1">Binds 2 Zn(2+) ions per monomer.</text>
</comment>
<comment type="subunit">
    <text evidence="1">Homodimer.</text>
</comment>
<comment type="subcellular location">
    <subcellularLocation>
        <location evidence="1">Cytoplasm</location>
    </subcellularLocation>
</comment>
<comment type="domain">
    <text evidence="1">The J domain is necessary and sufficient to stimulate DnaK ATPase activity. Zinc center 1 plays an important role in the autonomous, DnaK-independent chaperone activity of DnaJ. Zinc center 2 is essential for interaction with DnaK and for DnaJ activity.</text>
</comment>
<comment type="similarity">
    <text evidence="1">Belongs to the DnaJ family.</text>
</comment>
<reference key="1">
    <citation type="journal article" date="2007" name="Photosyn. Res.">
        <title>Complete nucleotide sequence of the freshwater unicellular cyanobacterium Synechococcus elongatus PCC 6301 chromosome: gene content and organization.</title>
        <authorList>
            <person name="Sugita C."/>
            <person name="Ogata K."/>
            <person name="Shikata M."/>
            <person name="Jikuya H."/>
            <person name="Takano J."/>
            <person name="Furumichi M."/>
            <person name="Kanehisa M."/>
            <person name="Omata T."/>
            <person name="Sugiura M."/>
            <person name="Sugita M."/>
        </authorList>
    </citation>
    <scope>NUCLEOTIDE SEQUENCE [LARGE SCALE GENOMIC DNA]</scope>
    <source>
        <strain>ATCC 27144 / PCC 6301 / SAUG 1402/1</strain>
    </source>
</reference>
<dbReference type="EMBL" id="AP008231">
    <property type="protein sequence ID" value="BAD80209.1"/>
    <property type="molecule type" value="Genomic_DNA"/>
</dbReference>
<dbReference type="RefSeq" id="WP_011244329.1">
    <property type="nucleotide sequence ID" value="NZ_CP085785.1"/>
</dbReference>
<dbReference type="SMR" id="Q5N0G1"/>
<dbReference type="GeneID" id="72430950"/>
<dbReference type="KEGG" id="syc:syc2019_c"/>
<dbReference type="eggNOG" id="COG0484">
    <property type="taxonomic scope" value="Bacteria"/>
</dbReference>
<dbReference type="Proteomes" id="UP000001175">
    <property type="component" value="Chromosome"/>
</dbReference>
<dbReference type="GO" id="GO:0005737">
    <property type="term" value="C:cytoplasm"/>
    <property type="evidence" value="ECO:0007669"/>
    <property type="project" value="UniProtKB-SubCell"/>
</dbReference>
<dbReference type="GO" id="GO:0005524">
    <property type="term" value="F:ATP binding"/>
    <property type="evidence" value="ECO:0007669"/>
    <property type="project" value="InterPro"/>
</dbReference>
<dbReference type="GO" id="GO:0031072">
    <property type="term" value="F:heat shock protein binding"/>
    <property type="evidence" value="ECO:0007669"/>
    <property type="project" value="InterPro"/>
</dbReference>
<dbReference type="GO" id="GO:0051082">
    <property type="term" value="F:unfolded protein binding"/>
    <property type="evidence" value="ECO:0007669"/>
    <property type="project" value="UniProtKB-UniRule"/>
</dbReference>
<dbReference type="GO" id="GO:0008270">
    <property type="term" value="F:zinc ion binding"/>
    <property type="evidence" value="ECO:0007669"/>
    <property type="project" value="UniProtKB-UniRule"/>
</dbReference>
<dbReference type="GO" id="GO:0051085">
    <property type="term" value="P:chaperone cofactor-dependent protein refolding"/>
    <property type="evidence" value="ECO:0007669"/>
    <property type="project" value="TreeGrafter"/>
</dbReference>
<dbReference type="GO" id="GO:0006260">
    <property type="term" value="P:DNA replication"/>
    <property type="evidence" value="ECO:0007669"/>
    <property type="project" value="UniProtKB-KW"/>
</dbReference>
<dbReference type="GO" id="GO:0042026">
    <property type="term" value="P:protein refolding"/>
    <property type="evidence" value="ECO:0007669"/>
    <property type="project" value="TreeGrafter"/>
</dbReference>
<dbReference type="GO" id="GO:0009408">
    <property type="term" value="P:response to heat"/>
    <property type="evidence" value="ECO:0007669"/>
    <property type="project" value="InterPro"/>
</dbReference>
<dbReference type="CDD" id="cd06257">
    <property type="entry name" value="DnaJ"/>
    <property type="match status" value="1"/>
</dbReference>
<dbReference type="CDD" id="cd10747">
    <property type="entry name" value="DnaJ_C"/>
    <property type="match status" value="1"/>
</dbReference>
<dbReference type="CDD" id="cd10719">
    <property type="entry name" value="DnaJ_zf"/>
    <property type="match status" value="1"/>
</dbReference>
<dbReference type="FunFam" id="2.60.260.20:FF:000005">
    <property type="entry name" value="Chaperone protein dnaJ 1, mitochondrial"/>
    <property type="match status" value="1"/>
</dbReference>
<dbReference type="FunFam" id="2.10.230.10:FF:000002">
    <property type="entry name" value="Molecular chaperone DnaJ"/>
    <property type="match status" value="1"/>
</dbReference>
<dbReference type="FunFam" id="2.60.260.20:FF:000009">
    <property type="entry name" value="Putative Mitochondrial DnaJ chaperone"/>
    <property type="match status" value="1"/>
</dbReference>
<dbReference type="Gene3D" id="1.10.287.110">
    <property type="entry name" value="DnaJ domain"/>
    <property type="match status" value="1"/>
</dbReference>
<dbReference type="Gene3D" id="2.10.230.10">
    <property type="entry name" value="Heat shock protein DnaJ, cysteine-rich domain"/>
    <property type="match status" value="1"/>
</dbReference>
<dbReference type="Gene3D" id="2.60.260.20">
    <property type="entry name" value="Urease metallochaperone UreE, N-terminal domain"/>
    <property type="match status" value="2"/>
</dbReference>
<dbReference type="HAMAP" id="MF_01152">
    <property type="entry name" value="DnaJ"/>
    <property type="match status" value="1"/>
</dbReference>
<dbReference type="InterPro" id="IPR012724">
    <property type="entry name" value="DnaJ"/>
</dbReference>
<dbReference type="InterPro" id="IPR002939">
    <property type="entry name" value="DnaJ_C"/>
</dbReference>
<dbReference type="InterPro" id="IPR001623">
    <property type="entry name" value="DnaJ_domain"/>
</dbReference>
<dbReference type="InterPro" id="IPR008971">
    <property type="entry name" value="HSP40/DnaJ_pept-bd"/>
</dbReference>
<dbReference type="InterPro" id="IPR001305">
    <property type="entry name" value="HSP_DnaJ_Cys-rich_dom"/>
</dbReference>
<dbReference type="InterPro" id="IPR036410">
    <property type="entry name" value="HSP_DnaJ_Cys-rich_dom_sf"/>
</dbReference>
<dbReference type="InterPro" id="IPR036869">
    <property type="entry name" value="J_dom_sf"/>
</dbReference>
<dbReference type="NCBIfam" id="TIGR02349">
    <property type="entry name" value="DnaJ_bact"/>
    <property type="match status" value="1"/>
</dbReference>
<dbReference type="NCBIfam" id="NF008035">
    <property type="entry name" value="PRK10767.1"/>
    <property type="match status" value="1"/>
</dbReference>
<dbReference type="NCBIfam" id="NF010886">
    <property type="entry name" value="PRK14293.1"/>
    <property type="match status" value="1"/>
</dbReference>
<dbReference type="PANTHER" id="PTHR43096:SF10">
    <property type="entry name" value="CHAPERONE PROTEIN DNAJ A6, CHLOROPLASTIC"/>
    <property type="match status" value="1"/>
</dbReference>
<dbReference type="PANTHER" id="PTHR43096">
    <property type="entry name" value="DNAJ HOMOLOG 1, MITOCHONDRIAL-RELATED"/>
    <property type="match status" value="1"/>
</dbReference>
<dbReference type="Pfam" id="PF00226">
    <property type="entry name" value="DnaJ"/>
    <property type="match status" value="1"/>
</dbReference>
<dbReference type="Pfam" id="PF01556">
    <property type="entry name" value="DnaJ_C"/>
    <property type="match status" value="1"/>
</dbReference>
<dbReference type="Pfam" id="PF00684">
    <property type="entry name" value="DnaJ_CXXCXGXG"/>
    <property type="match status" value="1"/>
</dbReference>
<dbReference type="PRINTS" id="PR00625">
    <property type="entry name" value="JDOMAIN"/>
</dbReference>
<dbReference type="SMART" id="SM00271">
    <property type="entry name" value="DnaJ"/>
    <property type="match status" value="1"/>
</dbReference>
<dbReference type="SUPFAM" id="SSF46565">
    <property type="entry name" value="Chaperone J-domain"/>
    <property type="match status" value="1"/>
</dbReference>
<dbReference type="SUPFAM" id="SSF57938">
    <property type="entry name" value="DnaJ/Hsp40 cysteine-rich domain"/>
    <property type="match status" value="1"/>
</dbReference>
<dbReference type="SUPFAM" id="SSF49493">
    <property type="entry name" value="HSP40/DnaJ peptide-binding domain"/>
    <property type="match status" value="2"/>
</dbReference>
<dbReference type="PROSITE" id="PS50076">
    <property type="entry name" value="DNAJ_2"/>
    <property type="match status" value="1"/>
</dbReference>
<dbReference type="PROSITE" id="PS51188">
    <property type="entry name" value="ZF_CR"/>
    <property type="match status" value="1"/>
</dbReference>
<name>DNAJ_SYNP6</name>
<proteinExistence type="inferred from homology"/>
<accession>Q5N0G1</accession>
<organism>
    <name type="scientific">Synechococcus sp. (strain ATCC 27144 / PCC 6301 / SAUG 1402/1)</name>
    <name type="common">Anacystis nidulans</name>
    <dbReference type="NCBI Taxonomy" id="269084"/>
    <lineage>
        <taxon>Bacteria</taxon>
        <taxon>Bacillati</taxon>
        <taxon>Cyanobacteriota</taxon>
        <taxon>Cyanophyceae</taxon>
        <taxon>Synechococcales</taxon>
        <taxon>Synechococcaceae</taxon>
        <taxon>Synechococcus</taxon>
    </lineage>
</organism>
<keyword id="KW-0143">Chaperone</keyword>
<keyword id="KW-0963">Cytoplasm</keyword>
<keyword id="KW-0235">DNA replication</keyword>
<keyword id="KW-0479">Metal-binding</keyword>
<keyword id="KW-0677">Repeat</keyword>
<keyword id="KW-0346">Stress response</keyword>
<keyword id="KW-0862">Zinc</keyword>
<keyword id="KW-0863">Zinc-finger</keyword>
<sequence>MAADYYQLLGVARDADKDEIKRAYRRLARKYHPDVNKEPGAEDKFKEINRAYEVLSEPETRARYDQFGEAGVSGAGAAGFQDFGDMGGFADIFETFFSGFGGMGGQQASARRRGPTRGEDLRLDLKLDFRDAIFGGEKEIRVTHEETCGTCQGSGAKAGTRPQTCTTCGGAGQVRRATRTPFGSFTQVSVCPTCEGSGQMIVDKCDDCGGAGRLRRPKKLKINIPAGVDSGTRLRVANEGDAGLRGGPPGDLYVYLFVSEDTQFRREGINLFSTVTISYLQAILGCSLEVATVDGPTELIIPPGTQPNAVLTVEGKGVPRLGNPVARGNLLVTIKVEIPTKISAEERELLEKVVQIRGDRAGKGGIEGFFKGVFGG</sequence>
<feature type="chain" id="PRO_0000070912" description="Chaperone protein DnaJ">
    <location>
        <begin position="1"/>
        <end position="376"/>
    </location>
</feature>
<feature type="domain" description="J" evidence="1">
    <location>
        <begin position="4"/>
        <end position="68"/>
    </location>
</feature>
<feature type="repeat" description="CXXCXGXG motif">
    <location>
        <begin position="148"/>
        <end position="155"/>
    </location>
</feature>
<feature type="repeat" description="CXXCXGXG motif">
    <location>
        <begin position="165"/>
        <end position="172"/>
    </location>
</feature>
<feature type="repeat" description="CXXCXGXG motif">
    <location>
        <begin position="191"/>
        <end position="198"/>
    </location>
</feature>
<feature type="repeat" description="CXXCXGXG motif">
    <location>
        <begin position="205"/>
        <end position="212"/>
    </location>
</feature>
<feature type="zinc finger region" description="CR-type" evidence="1">
    <location>
        <begin position="135"/>
        <end position="217"/>
    </location>
</feature>
<feature type="binding site" evidence="1">
    <location>
        <position position="148"/>
    </location>
    <ligand>
        <name>Zn(2+)</name>
        <dbReference type="ChEBI" id="CHEBI:29105"/>
        <label>1</label>
    </ligand>
</feature>
<feature type="binding site" evidence="1">
    <location>
        <position position="151"/>
    </location>
    <ligand>
        <name>Zn(2+)</name>
        <dbReference type="ChEBI" id="CHEBI:29105"/>
        <label>1</label>
    </ligand>
</feature>
<feature type="binding site" evidence="1">
    <location>
        <position position="165"/>
    </location>
    <ligand>
        <name>Zn(2+)</name>
        <dbReference type="ChEBI" id="CHEBI:29105"/>
        <label>2</label>
    </ligand>
</feature>
<feature type="binding site" evidence="1">
    <location>
        <position position="168"/>
    </location>
    <ligand>
        <name>Zn(2+)</name>
        <dbReference type="ChEBI" id="CHEBI:29105"/>
        <label>2</label>
    </ligand>
</feature>
<feature type="binding site" evidence="1">
    <location>
        <position position="191"/>
    </location>
    <ligand>
        <name>Zn(2+)</name>
        <dbReference type="ChEBI" id="CHEBI:29105"/>
        <label>2</label>
    </ligand>
</feature>
<feature type="binding site" evidence="1">
    <location>
        <position position="194"/>
    </location>
    <ligand>
        <name>Zn(2+)</name>
        <dbReference type="ChEBI" id="CHEBI:29105"/>
        <label>2</label>
    </ligand>
</feature>
<feature type="binding site" evidence="1">
    <location>
        <position position="205"/>
    </location>
    <ligand>
        <name>Zn(2+)</name>
        <dbReference type="ChEBI" id="CHEBI:29105"/>
        <label>1</label>
    </ligand>
</feature>
<feature type="binding site" evidence="1">
    <location>
        <position position="208"/>
    </location>
    <ligand>
        <name>Zn(2+)</name>
        <dbReference type="ChEBI" id="CHEBI:29105"/>
        <label>1</label>
    </ligand>
</feature>
<protein>
    <recommendedName>
        <fullName evidence="1">Chaperone protein DnaJ</fullName>
    </recommendedName>
</protein>
<evidence type="ECO:0000255" key="1">
    <source>
        <dbReference type="HAMAP-Rule" id="MF_01152"/>
    </source>
</evidence>